<name>3DHQ2_ASPFN</name>
<organism>
    <name type="scientific">Aspergillus flavus (strain ATCC 200026 / FGSC A1120 / IAM 13836 / NRRL 3357 / JCM 12722 / SRRC 167)</name>
    <dbReference type="NCBI Taxonomy" id="332952"/>
    <lineage>
        <taxon>Eukaryota</taxon>
        <taxon>Fungi</taxon>
        <taxon>Dikarya</taxon>
        <taxon>Ascomycota</taxon>
        <taxon>Pezizomycotina</taxon>
        <taxon>Eurotiomycetes</taxon>
        <taxon>Eurotiomycetidae</taxon>
        <taxon>Eurotiales</taxon>
        <taxon>Aspergillaceae</taxon>
        <taxon>Aspergillus</taxon>
        <taxon>Aspergillus subgen. Circumdati</taxon>
    </lineage>
</organism>
<accession>B8NXI4</accession>
<protein>
    <recommendedName>
        <fullName evidence="1">Catabolic 3-dehydroquinase 2</fullName>
        <shortName evidence="1">cDHQase 2</shortName>
        <ecNumber evidence="1">4.2.1.10</ecNumber>
    </recommendedName>
    <alternativeName>
        <fullName evidence="1">3-dehydroquinate dehydratase 2</fullName>
    </alternativeName>
</protein>
<feature type="chain" id="PRO_0000402353" description="Catabolic 3-dehydroquinase 2">
    <location>
        <begin position="1"/>
        <end position="150"/>
    </location>
</feature>
<feature type="active site" description="Proton acceptor" evidence="1">
    <location>
        <position position="23"/>
    </location>
</feature>
<feature type="active site" description="Proton donor" evidence="1">
    <location>
        <position position="100"/>
    </location>
</feature>
<feature type="binding site" evidence="1">
    <location>
        <position position="74"/>
    </location>
    <ligand>
        <name>substrate</name>
    </ligand>
</feature>
<feature type="binding site" evidence="1">
    <location>
        <position position="80"/>
    </location>
    <ligand>
        <name>substrate</name>
    </ligand>
</feature>
<feature type="binding site" evidence="1">
    <location>
        <position position="87"/>
    </location>
    <ligand>
        <name>substrate</name>
    </ligand>
</feature>
<feature type="binding site" evidence="1">
    <location>
        <begin position="101"/>
        <end position="102"/>
    </location>
    <ligand>
        <name>substrate</name>
    </ligand>
</feature>
<feature type="binding site" evidence="1">
    <location>
        <position position="111"/>
    </location>
    <ligand>
        <name>substrate</name>
    </ligand>
</feature>
<feature type="site" description="Transition state stabilizer" evidence="1">
    <location>
        <position position="18"/>
    </location>
</feature>
<proteinExistence type="inferred from homology"/>
<comment type="function">
    <text evidence="1">Is involved in the catabolism of quinate. Allows the utilization of quinate as carbon source via the beta-ketoadipate pathway.</text>
</comment>
<comment type="catalytic activity">
    <reaction evidence="1">
        <text>3-dehydroquinate = 3-dehydroshikimate + H2O</text>
        <dbReference type="Rhea" id="RHEA:21096"/>
        <dbReference type="ChEBI" id="CHEBI:15377"/>
        <dbReference type="ChEBI" id="CHEBI:16630"/>
        <dbReference type="ChEBI" id="CHEBI:32364"/>
        <dbReference type="EC" id="4.2.1.10"/>
    </reaction>
</comment>
<comment type="pathway">
    <text evidence="1">Aromatic compound metabolism; 3,4-dihydroxybenzoate biosynthesis; 3,4-dihydroxybenzoate from 3-dehydroquinate: step 1/2.</text>
</comment>
<comment type="subunit">
    <text evidence="1">Homododecamer. Adopts a ring-like structure, composed of an arrangement of two hexameric rings stacked on top of one another.</text>
</comment>
<comment type="similarity">
    <text evidence="1">Belongs to the type-II 3-dehydroquinase family.</text>
</comment>
<dbReference type="EC" id="4.2.1.10" evidence="1"/>
<dbReference type="EMBL" id="EQ963486">
    <property type="protein sequence ID" value="EED44920.1"/>
    <property type="molecule type" value="Genomic_DNA"/>
</dbReference>
<dbReference type="RefSeq" id="XP_002385049.1">
    <property type="nucleotide sequence ID" value="XM_002385008.1"/>
</dbReference>
<dbReference type="SMR" id="B8NXI4"/>
<dbReference type="STRING" id="332952.B8NXI4"/>
<dbReference type="EnsemblFungi" id="EED44920">
    <property type="protein sequence ID" value="EED44920"/>
    <property type="gene ID" value="AFLA_008030"/>
</dbReference>
<dbReference type="VEuPathDB" id="FungiDB:AFLA_013100"/>
<dbReference type="eggNOG" id="ENOG502S1A9">
    <property type="taxonomic scope" value="Eukaryota"/>
</dbReference>
<dbReference type="HOGENOM" id="CLU_090968_1_0_1"/>
<dbReference type="OMA" id="VIECHIS"/>
<dbReference type="UniPathway" id="UPA00088">
    <property type="reaction ID" value="UER00178"/>
</dbReference>
<dbReference type="GO" id="GO:0003855">
    <property type="term" value="F:3-dehydroquinate dehydratase activity"/>
    <property type="evidence" value="ECO:0007669"/>
    <property type="project" value="UniProtKB-UniRule"/>
</dbReference>
<dbReference type="GO" id="GO:0046279">
    <property type="term" value="P:3,4-dihydroxybenzoate biosynthetic process"/>
    <property type="evidence" value="ECO:0007669"/>
    <property type="project" value="UniProtKB-UniRule"/>
</dbReference>
<dbReference type="GO" id="GO:0019631">
    <property type="term" value="P:quinate catabolic process"/>
    <property type="evidence" value="ECO:0007669"/>
    <property type="project" value="TreeGrafter"/>
</dbReference>
<dbReference type="CDD" id="cd00466">
    <property type="entry name" value="DHQase_II"/>
    <property type="match status" value="1"/>
</dbReference>
<dbReference type="Gene3D" id="3.40.50.9100">
    <property type="entry name" value="Dehydroquinase, class II"/>
    <property type="match status" value="1"/>
</dbReference>
<dbReference type="HAMAP" id="MF_00169">
    <property type="entry name" value="AroQ"/>
    <property type="match status" value="1"/>
</dbReference>
<dbReference type="InterPro" id="IPR001874">
    <property type="entry name" value="DHquinase_II"/>
</dbReference>
<dbReference type="InterPro" id="IPR018509">
    <property type="entry name" value="DHquinase_II_CS"/>
</dbReference>
<dbReference type="InterPro" id="IPR036441">
    <property type="entry name" value="DHquinase_II_sf"/>
</dbReference>
<dbReference type="NCBIfam" id="TIGR01088">
    <property type="entry name" value="aroQ"/>
    <property type="match status" value="1"/>
</dbReference>
<dbReference type="NCBIfam" id="NF003804">
    <property type="entry name" value="PRK05395.1-1"/>
    <property type="match status" value="1"/>
</dbReference>
<dbReference type="NCBIfam" id="NF003805">
    <property type="entry name" value="PRK05395.1-2"/>
    <property type="match status" value="1"/>
</dbReference>
<dbReference type="NCBIfam" id="NF003806">
    <property type="entry name" value="PRK05395.1-3"/>
    <property type="match status" value="1"/>
</dbReference>
<dbReference type="NCBIfam" id="NF003807">
    <property type="entry name" value="PRK05395.1-4"/>
    <property type="match status" value="1"/>
</dbReference>
<dbReference type="PANTHER" id="PTHR21272">
    <property type="entry name" value="CATABOLIC 3-DEHYDROQUINASE"/>
    <property type="match status" value="1"/>
</dbReference>
<dbReference type="PANTHER" id="PTHR21272:SF3">
    <property type="entry name" value="CATABOLIC 3-DEHYDROQUINASE"/>
    <property type="match status" value="1"/>
</dbReference>
<dbReference type="Pfam" id="PF01220">
    <property type="entry name" value="DHquinase_II"/>
    <property type="match status" value="1"/>
</dbReference>
<dbReference type="PIRSF" id="PIRSF001399">
    <property type="entry name" value="DHquinase_II"/>
    <property type="match status" value="1"/>
</dbReference>
<dbReference type="SUPFAM" id="SSF52304">
    <property type="entry name" value="Type II 3-dehydroquinate dehydratase"/>
    <property type="match status" value="1"/>
</dbReference>
<dbReference type="PROSITE" id="PS01029">
    <property type="entry name" value="DEHYDROQUINASE_II"/>
    <property type="match status" value="1"/>
</dbReference>
<reference key="1">
    <citation type="journal article" date="2015" name="Genome Announc.">
        <title>Genome sequence of Aspergillus flavus NRRL 3357, a strain that causes aflatoxin contamination of food and feed.</title>
        <authorList>
            <person name="Nierman W.C."/>
            <person name="Yu J."/>
            <person name="Fedorova-Abrams N.D."/>
            <person name="Losada L."/>
            <person name="Cleveland T.E."/>
            <person name="Bhatnagar D."/>
            <person name="Bennett J.W."/>
            <person name="Dean R."/>
            <person name="Payne G.A."/>
        </authorList>
    </citation>
    <scope>NUCLEOTIDE SEQUENCE [LARGE SCALE GENOMIC DNA]</scope>
    <source>
        <strain>ATCC 200026 / FGSC A1120 / IAM 13836 / NRRL 3357 / JCM 12722 / SRRC 167</strain>
    </source>
</reference>
<sequence length="150" mass="16226">MPSILLLNGPNLNLLGTREPHLYGTTTLNDVETVAKELAASYGAEVECLQSNHEGVLIDRIHEARGKSQAVVINPGAFTHTSVALRDALLGVGLPFIEVHITNVHARESFRHHSYLSDKAAAVIIGLGTFGYQVAVKHALENLVGLEERK</sequence>
<evidence type="ECO:0000255" key="1">
    <source>
        <dbReference type="HAMAP-Rule" id="MF_03136"/>
    </source>
</evidence>
<gene>
    <name evidence="1" type="primary">qutE2</name>
    <name type="ORF">AFLA_008030</name>
</gene>
<keyword id="KW-0456">Lyase</keyword>
<keyword id="KW-0672">Quinate metabolism</keyword>